<comment type="catalytic activity">
    <reaction evidence="1">
        <text>beta-D-fructose 1,6-bisphosphate + H2O = beta-D-fructose 6-phosphate + phosphate</text>
        <dbReference type="Rhea" id="RHEA:11064"/>
        <dbReference type="ChEBI" id="CHEBI:15377"/>
        <dbReference type="ChEBI" id="CHEBI:32966"/>
        <dbReference type="ChEBI" id="CHEBI:43474"/>
        <dbReference type="ChEBI" id="CHEBI:57634"/>
        <dbReference type="EC" id="3.1.3.11"/>
    </reaction>
</comment>
<comment type="cofactor">
    <cofactor evidence="1">
        <name>Mg(2+)</name>
        <dbReference type="ChEBI" id="CHEBI:18420"/>
    </cofactor>
    <text evidence="1">Binds 2 magnesium ions per subunit.</text>
</comment>
<comment type="pathway">
    <text evidence="1">Carbohydrate biosynthesis; gluconeogenesis.</text>
</comment>
<comment type="subunit">
    <text evidence="1">Homotetramer.</text>
</comment>
<comment type="subcellular location">
    <subcellularLocation>
        <location evidence="1">Cytoplasm</location>
    </subcellularLocation>
</comment>
<comment type="similarity">
    <text evidence="1">Belongs to the FBPase class 1 family.</text>
</comment>
<evidence type="ECO:0000255" key="1">
    <source>
        <dbReference type="HAMAP-Rule" id="MF_01855"/>
    </source>
</evidence>
<protein>
    <recommendedName>
        <fullName evidence="1">Fructose-1,6-bisphosphatase class 1</fullName>
        <shortName evidence="1">FBPase class 1</shortName>
        <ecNumber evidence="1">3.1.3.11</ecNumber>
    </recommendedName>
    <alternativeName>
        <fullName evidence="1">D-fructose-1,6-bisphosphate 1-phosphohydrolase class 1</fullName>
    </alternativeName>
</protein>
<keyword id="KW-0119">Carbohydrate metabolism</keyword>
<keyword id="KW-0963">Cytoplasm</keyword>
<keyword id="KW-0378">Hydrolase</keyword>
<keyword id="KW-0460">Magnesium</keyword>
<keyword id="KW-0479">Metal-binding</keyword>
<keyword id="KW-1185">Reference proteome</keyword>
<accession>Q9HU73</accession>
<sequence>MSRVTLSRYLIEQTRSHNTPADLRFLIEVVARACKEISHAVSKGALGGVLGSMGTENVQGEVQKKLDVMSNEILLEANEWAGNLAGMASEEMDHPYQIPGRYPKGAYLLVFDPLDGSSNIDVNVSVGTIFSVLRCPNEYLNQNDTLREEAFLQPGTTQVAAGYAIYGPQTMLMLTLGNGVKGFTLDRELGSFVLTHDNISVPESTAEFAINMSNQRHWEAPVKRYVEELLAGKEGPLGKNYNMRWIASMVADVHRILTRGGVFMYPRDAREPEKPGKLRLMYEANPMSFIIEQAGGAATNGTQRILDIKPENLHQRVAVFLGSKQEVERITGYHAE</sequence>
<name>F16PA_PSEAE</name>
<proteinExistence type="inferred from homology"/>
<dbReference type="EC" id="3.1.3.11" evidence="1"/>
<dbReference type="EMBL" id="AE004091">
    <property type="protein sequence ID" value="AAG08495.1"/>
    <property type="molecule type" value="Genomic_DNA"/>
</dbReference>
<dbReference type="PIR" id="G83008">
    <property type="entry name" value="G83008"/>
</dbReference>
<dbReference type="RefSeq" id="NP_253797.1">
    <property type="nucleotide sequence ID" value="NC_002516.2"/>
</dbReference>
<dbReference type="RefSeq" id="WP_003095990.1">
    <property type="nucleotide sequence ID" value="NZ_QZGE01000002.1"/>
</dbReference>
<dbReference type="SMR" id="Q9HU73"/>
<dbReference type="FunCoup" id="Q9HU73">
    <property type="interactions" value="566"/>
</dbReference>
<dbReference type="STRING" id="208964.PA5110"/>
<dbReference type="PaxDb" id="208964-PA5110"/>
<dbReference type="GeneID" id="882240"/>
<dbReference type="KEGG" id="pae:PA5110"/>
<dbReference type="PATRIC" id="fig|208964.12.peg.5355"/>
<dbReference type="PseudoCAP" id="PA5110"/>
<dbReference type="HOGENOM" id="CLU_039977_0_0_6"/>
<dbReference type="InParanoid" id="Q9HU73"/>
<dbReference type="OrthoDB" id="9806756at2"/>
<dbReference type="PhylomeDB" id="Q9HU73"/>
<dbReference type="BioCyc" id="PAER208964:G1FZ6-5225-MONOMER"/>
<dbReference type="UniPathway" id="UPA00138"/>
<dbReference type="Proteomes" id="UP000002438">
    <property type="component" value="Chromosome"/>
</dbReference>
<dbReference type="GO" id="GO:0005737">
    <property type="term" value="C:cytoplasm"/>
    <property type="evidence" value="ECO:0000318"/>
    <property type="project" value="GO_Central"/>
</dbReference>
<dbReference type="GO" id="GO:0005829">
    <property type="term" value="C:cytosol"/>
    <property type="evidence" value="ECO:0000318"/>
    <property type="project" value="GO_Central"/>
</dbReference>
<dbReference type="GO" id="GO:0042132">
    <property type="term" value="F:fructose 1,6-bisphosphate 1-phosphatase activity"/>
    <property type="evidence" value="ECO:0000318"/>
    <property type="project" value="GO_Central"/>
</dbReference>
<dbReference type="GO" id="GO:0000287">
    <property type="term" value="F:magnesium ion binding"/>
    <property type="evidence" value="ECO:0007669"/>
    <property type="project" value="UniProtKB-UniRule"/>
</dbReference>
<dbReference type="GO" id="GO:0030388">
    <property type="term" value="P:fructose 1,6-bisphosphate metabolic process"/>
    <property type="evidence" value="ECO:0000318"/>
    <property type="project" value="GO_Central"/>
</dbReference>
<dbReference type="GO" id="GO:0006002">
    <property type="term" value="P:fructose 6-phosphate metabolic process"/>
    <property type="evidence" value="ECO:0000318"/>
    <property type="project" value="GO_Central"/>
</dbReference>
<dbReference type="GO" id="GO:0006000">
    <property type="term" value="P:fructose metabolic process"/>
    <property type="evidence" value="ECO:0000318"/>
    <property type="project" value="GO_Central"/>
</dbReference>
<dbReference type="GO" id="GO:0006094">
    <property type="term" value="P:gluconeogenesis"/>
    <property type="evidence" value="ECO:0000318"/>
    <property type="project" value="GO_Central"/>
</dbReference>
<dbReference type="CDD" id="cd00354">
    <property type="entry name" value="FBPase"/>
    <property type="match status" value="1"/>
</dbReference>
<dbReference type="FunFam" id="3.30.540.10:FF:000006">
    <property type="entry name" value="Fructose-1,6-bisphosphatase class 1"/>
    <property type="match status" value="1"/>
</dbReference>
<dbReference type="FunFam" id="3.40.190.80:FF:000011">
    <property type="entry name" value="Fructose-1,6-bisphosphatase class 1"/>
    <property type="match status" value="1"/>
</dbReference>
<dbReference type="Gene3D" id="3.40.190.80">
    <property type="match status" value="1"/>
</dbReference>
<dbReference type="Gene3D" id="3.30.540.10">
    <property type="entry name" value="Fructose-1,6-Bisphosphatase, subunit A, domain 1"/>
    <property type="match status" value="1"/>
</dbReference>
<dbReference type="HAMAP" id="MF_01855">
    <property type="entry name" value="FBPase_class1"/>
    <property type="match status" value="1"/>
</dbReference>
<dbReference type="InterPro" id="IPR044015">
    <property type="entry name" value="FBPase_C_dom"/>
</dbReference>
<dbReference type="InterPro" id="IPR000146">
    <property type="entry name" value="FBPase_class-1"/>
</dbReference>
<dbReference type="InterPro" id="IPR033391">
    <property type="entry name" value="FBPase_N"/>
</dbReference>
<dbReference type="InterPro" id="IPR028343">
    <property type="entry name" value="FBPtase"/>
</dbReference>
<dbReference type="NCBIfam" id="NF006778">
    <property type="entry name" value="PRK09293.1-1"/>
    <property type="match status" value="1"/>
</dbReference>
<dbReference type="NCBIfam" id="NF006779">
    <property type="entry name" value="PRK09293.1-3"/>
    <property type="match status" value="1"/>
</dbReference>
<dbReference type="NCBIfam" id="NF006780">
    <property type="entry name" value="PRK09293.1-4"/>
    <property type="match status" value="1"/>
</dbReference>
<dbReference type="PANTHER" id="PTHR11556">
    <property type="entry name" value="FRUCTOSE-1,6-BISPHOSPHATASE-RELATED"/>
    <property type="match status" value="1"/>
</dbReference>
<dbReference type="PANTHER" id="PTHR11556:SF35">
    <property type="entry name" value="SEDOHEPTULOSE-1,7-BISPHOSPHATASE, CHLOROPLASTIC"/>
    <property type="match status" value="1"/>
</dbReference>
<dbReference type="Pfam" id="PF00316">
    <property type="entry name" value="FBPase"/>
    <property type="match status" value="1"/>
</dbReference>
<dbReference type="Pfam" id="PF18913">
    <property type="entry name" value="FBPase_C"/>
    <property type="match status" value="1"/>
</dbReference>
<dbReference type="PIRSF" id="PIRSF500210">
    <property type="entry name" value="FBPtase"/>
    <property type="match status" value="1"/>
</dbReference>
<dbReference type="PIRSF" id="PIRSF000904">
    <property type="entry name" value="FBPtase_SBPase"/>
    <property type="match status" value="1"/>
</dbReference>
<dbReference type="PRINTS" id="PR00115">
    <property type="entry name" value="F16BPHPHTASE"/>
</dbReference>
<dbReference type="SUPFAM" id="SSF56655">
    <property type="entry name" value="Carbohydrate phosphatase"/>
    <property type="match status" value="1"/>
</dbReference>
<feature type="chain" id="PRO_0000364640" description="Fructose-1,6-bisphosphatase class 1">
    <location>
        <begin position="1"/>
        <end position="336"/>
    </location>
</feature>
<feature type="binding site" evidence="1">
    <location>
        <position position="90"/>
    </location>
    <ligand>
        <name>Mg(2+)</name>
        <dbReference type="ChEBI" id="CHEBI:18420"/>
        <label>1</label>
    </ligand>
</feature>
<feature type="binding site" evidence="1">
    <location>
        <position position="112"/>
    </location>
    <ligand>
        <name>Mg(2+)</name>
        <dbReference type="ChEBI" id="CHEBI:18420"/>
        <label>1</label>
    </ligand>
</feature>
<feature type="binding site" evidence="1">
    <location>
        <position position="112"/>
    </location>
    <ligand>
        <name>Mg(2+)</name>
        <dbReference type="ChEBI" id="CHEBI:18420"/>
        <label>2</label>
    </ligand>
</feature>
<feature type="binding site" evidence="1">
    <location>
        <position position="114"/>
    </location>
    <ligand>
        <name>Mg(2+)</name>
        <dbReference type="ChEBI" id="CHEBI:18420"/>
        <label>1</label>
    </ligand>
</feature>
<feature type="binding site" evidence="1">
    <location>
        <begin position="115"/>
        <end position="118"/>
    </location>
    <ligand>
        <name>substrate</name>
    </ligand>
</feature>
<feature type="binding site" evidence="1">
    <location>
        <position position="115"/>
    </location>
    <ligand>
        <name>Mg(2+)</name>
        <dbReference type="ChEBI" id="CHEBI:18420"/>
        <label>2</label>
    </ligand>
</feature>
<feature type="binding site" evidence="1">
    <location>
        <position position="211"/>
    </location>
    <ligand>
        <name>substrate</name>
    </ligand>
</feature>
<feature type="binding site" evidence="1">
    <location>
        <position position="277"/>
    </location>
    <ligand>
        <name>substrate</name>
    </ligand>
</feature>
<feature type="binding site" evidence="1">
    <location>
        <position position="283"/>
    </location>
    <ligand>
        <name>Mg(2+)</name>
        <dbReference type="ChEBI" id="CHEBI:18420"/>
        <label>2</label>
    </ligand>
</feature>
<gene>
    <name evidence="1" type="primary">fbp</name>
    <name type="ordered locus">PA5110</name>
</gene>
<organism>
    <name type="scientific">Pseudomonas aeruginosa (strain ATCC 15692 / DSM 22644 / CIP 104116 / JCM 14847 / LMG 12228 / 1C / PRS 101 / PAO1)</name>
    <dbReference type="NCBI Taxonomy" id="208964"/>
    <lineage>
        <taxon>Bacteria</taxon>
        <taxon>Pseudomonadati</taxon>
        <taxon>Pseudomonadota</taxon>
        <taxon>Gammaproteobacteria</taxon>
        <taxon>Pseudomonadales</taxon>
        <taxon>Pseudomonadaceae</taxon>
        <taxon>Pseudomonas</taxon>
    </lineage>
</organism>
<reference key="1">
    <citation type="journal article" date="2000" name="Nature">
        <title>Complete genome sequence of Pseudomonas aeruginosa PAO1, an opportunistic pathogen.</title>
        <authorList>
            <person name="Stover C.K."/>
            <person name="Pham X.-Q.T."/>
            <person name="Erwin A.L."/>
            <person name="Mizoguchi S.D."/>
            <person name="Warrener P."/>
            <person name="Hickey M.J."/>
            <person name="Brinkman F.S.L."/>
            <person name="Hufnagle W.O."/>
            <person name="Kowalik D.J."/>
            <person name="Lagrou M."/>
            <person name="Garber R.L."/>
            <person name="Goltry L."/>
            <person name="Tolentino E."/>
            <person name="Westbrock-Wadman S."/>
            <person name="Yuan Y."/>
            <person name="Brody L.L."/>
            <person name="Coulter S.N."/>
            <person name="Folger K.R."/>
            <person name="Kas A."/>
            <person name="Larbig K."/>
            <person name="Lim R.M."/>
            <person name="Smith K.A."/>
            <person name="Spencer D.H."/>
            <person name="Wong G.K.-S."/>
            <person name="Wu Z."/>
            <person name="Paulsen I.T."/>
            <person name="Reizer J."/>
            <person name="Saier M.H. Jr."/>
            <person name="Hancock R.E.W."/>
            <person name="Lory S."/>
            <person name="Olson M.V."/>
        </authorList>
    </citation>
    <scope>NUCLEOTIDE SEQUENCE [LARGE SCALE GENOMIC DNA]</scope>
    <source>
        <strain>ATCC 15692 / DSM 22644 / CIP 104116 / JCM 14847 / LMG 12228 / 1C / PRS 101 / PAO1</strain>
    </source>
</reference>